<accession>P06325</accession>
<proteinExistence type="predicted"/>
<reference key="1">
    <citation type="journal article" date="1986" name="J. Exp. Med.">
        <title>T cell-specific gamma genes in C57BL/10 mice. Sequence and expression of new constant and variable region genes.</title>
        <authorList>
            <person name="Iwamoto A."/>
            <person name="Rupp F."/>
            <person name="Ohashi P.S."/>
            <person name="Walker C.L."/>
            <person name="Pircher H."/>
            <person name="Joho R."/>
            <person name="Hengartner H."/>
            <person name="Mak T.W."/>
        </authorList>
    </citation>
    <scope>NUCLEOTIDE SEQUENCE</scope>
</reference>
<feature type="signal peptide">
    <location>
        <begin position="1"/>
        <end position="18"/>
    </location>
</feature>
<feature type="chain" id="PRO_0000033610" description="T-cell receptor gamma chain V region 5/10-13">
    <location>
        <begin position="19"/>
        <end position="135"/>
    </location>
</feature>
<feature type="region of interest" description="V segment">
    <location>
        <begin position="19"/>
        <end position="114"/>
    </location>
</feature>
<feature type="region of interest" description="J segment">
    <location>
        <begin position="115"/>
        <end position="135"/>
    </location>
</feature>
<feature type="non-terminal residue">
    <location>
        <position position="135"/>
    </location>
</feature>
<organism>
    <name type="scientific">Mus musculus</name>
    <name type="common">Mouse</name>
    <dbReference type="NCBI Taxonomy" id="10090"/>
    <lineage>
        <taxon>Eukaryota</taxon>
        <taxon>Metazoa</taxon>
        <taxon>Chordata</taxon>
        <taxon>Craniata</taxon>
        <taxon>Vertebrata</taxon>
        <taxon>Euteleostomi</taxon>
        <taxon>Mammalia</taxon>
        <taxon>Eutheria</taxon>
        <taxon>Euarchontoglires</taxon>
        <taxon>Glires</taxon>
        <taxon>Rodentia</taxon>
        <taxon>Myomorpha</taxon>
        <taxon>Muroidea</taxon>
        <taxon>Muridae</taxon>
        <taxon>Murinae</taxon>
        <taxon>Mus</taxon>
        <taxon>Mus</taxon>
    </lineage>
</organism>
<name>TVC4_MOUSE</name>
<protein>
    <recommendedName>
        <fullName>T-cell receptor gamma chain V region 5/10-13</fullName>
    </recommendedName>
</protein>
<keyword id="KW-1064">Adaptive immunity</keyword>
<keyword id="KW-0391">Immunity</keyword>
<keyword id="KW-0393">Immunoglobulin domain</keyword>
<keyword id="KW-0675">Receptor</keyword>
<keyword id="KW-1185">Reference proteome</keyword>
<keyword id="KW-0732">Signal</keyword>
<keyword id="KW-1279">T cell receptor</keyword>
<gene>
    <name type="primary">Tcrg-V1</name>
</gene>
<sequence>MLLLRWPTFCCLWVFGLGQLEQTELSVTRATDESAQISCIVSLPYFSNTAIHWYRQKAKKFEYLIYVSTNYNQRPLGGKNKKIEASKDFQTSTSTLKINYLKKEDEATYYCAVCRSGTSWVKIFAKGTKLVVIPP</sequence>
<dbReference type="PIR" id="A02021">
    <property type="entry name" value="RWMS8V"/>
</dbReference>
<dbReference type="SMR" id="P06325"/>
<dbReference type="FunCoup" id="P06325">
    <property type="interactions" value="508"/>
</dbReference>
<dbReference type="AGR" id="MGI:98631"/>
<dbReference type="MGI" id="MGI:98631">
    <property type="gene designation" value="Tcrg-V1"/>
</dbReference>
<dbReference type="InParanoid" id="P06325"/>
<dbReference type="Proteomes" id="UP000000589">
    <property type="component" value="Unplaced"/>
</dbReference>
<dbReference type="RNAct" id="P06325">
    <property type="molecule type" value="protein"/>
</dbReference>
<dbReference type="GO" id="GO:0042101">
    <property type="term" value="C:T cell receptor complex"/>
    <property type="evidence" value="ECO:0007669"/>
    <property type="project" value="UniProtKB-KW"/>
</dbReference>
<dbReference type="GO" id="GO:0002250">
    <property type="term" value="P:adaptive immune response"/>
    <property type="evidence" value="ECO:0007669"/>
    <property type="project" value="UniProtKB-KW"/>
</dbReference>
<dbReference type="CDD" id="cd04982">
    <property type="entry name" value="IgV_TCR_gamma"/>
    <property type="match status" value="1"/>
</dbReference>
<dbReference type="FunFam" id="2.60.40.10:FF:001649">
    <property type="entry name" value="T cell receptor gamma, variable 3"/>
    <property type="match status" value="1"/>
</dbReference>
<dbReference type="Gene3D" id="2.60.40.10">
    <property type="entry name" value="Immunoglobulins"/>
    <property type="match status" value="1"/>
</dbReference>
<dbReference type="InterPro" id="IPR007110">
    <property type="entry name" value="Ig-like_dom"/>
</dbReference>
<dbReference type="InterPro" id="IPR036179">
    <property type="entry name" value="Ig-like_dom_sf"/>
</dbReference>
<dbReference type="InterPro" id="IPR013783">
    <property type="entry name" value="Ig-like_fold"/>
</dbReference>
<dbReference type="InterPro" id="IPR003599">
    <property type="entry name" value="Ig_sub"/>
</dbReference>
<dbReference type="InterPro" id="IPR013106">
    <property type="entry name" value="Ig_V-set"/>
</dbReference>
<dbReference type="InterPro" id="IPR051117">
    <property type="entry name" value="TRG_var/const_region"/>
</dbReference>
<dbReference type="PANTHER" id="PTHR19256:SF40">
    <property type="entry name" value="NON-FUNCTIONAL T CELL RECEPTOR GAMMA VARIABLE 10-RELATED"/>
    <property type="match status" value="1"/>
</dbReference>
<dbReference type="PANTHER" id="PTHR19256">
    <property type="entry name" value="T-CELL RECEPTOR GAMMA CHAIN"/>
    <property type="match status" value="1"/>
</dbReference>
<dbReference type="Pfam" id="PF07686">
    <property type="entry name" value="V-set"/>
    <property type="match status" value="1"/>
</dbReference>
<dbReference type="SMART" id="SM00409">
    <property type="entry name" value="IG"/>
    <property type="match status" value="1"/>
</dbReference>
<dbReference type="SMART" id="SM00406">
    <property type="entry name" value="IGv"/>
    <property type="match status" value="1"/>
</dbReference>
<dbReference type="SUPFAM" id="SSF48726">
    <property type="entry name" value="Immunoglobulin"/>
    <property type="match status" value="1"/>
</dbReference>
<dbReference type="PROSITE" id="PS50835">
    <property type="entry name" value="IG_LIKE"/>
    <property type="match status" value="1"/>
</dbReference>